<organism>
    <name type="scientific">Staphylococcus epidermidis (strain ATCC 35984 / DSM 28319 / BCRC 17069 / CCUG 31568 / BM 3577 / RP62A)</name>
    <dbReference type="NCBI Taxonomy" id="176279"/>
    <lineage>
        <taxon>Bacteria</taxon>
        <taxon>Bacillati</taxon>
        <taxon>Bacillota</taxon>
        <taxon>Bacilli</taxon>
        <taxon>Bacillales</taxon>
        <taxon>Staphylococcaceae</taxon>
        <taxon>Staphylococcus</taxon>
    </lineage>
</organism>
<proteinExistence type="inferred from homology"/>
<accession>Q5HQK0</accession>
<gene>
    <name evidence="1" type="primary">argG</name>
    <name type="ordered locus">SERP0549</name>
</gene>
<evidence type="ECO:0000255" key="1">
    <source>
        <dbReference type="HAMAP-Rule" id="MF_00005"/>
    </source>
</evidence>
<protein>
    <recommendedName>
        <fullName evidence="1">Argininosuccinate synthase</fullName>
        <ecNumber evidence="1">6.3.4.5</ecNumber>
    </recommendedName>
    <alternativeName>
        <fullName evidence="1">Citrulline--aspartate ligase</fullName>
    </alternativeName>
</protein>
<reference key="1">
    <citation type="journal article" date="2005" name="J. Bacteriol.">
        <title>Insights on evolution of virulence and resistance from the complete genome analysis of an early methicillin-resistant Staphylococcus aureus strain and a biofilm-producing methicillin-resistant Staphylococcus epidermidis strain.</title>
        <authorList>
            <person name="Gill S.R."/>
            <person name="Fouts D.E."/>
            <person name="Archer G.L."/>
            <person name="Mongodin E.F."/>
            <person name="DeBoy R.T."/>
            <person name="Ravel J."/>
            <person name="Paulsen I.T."/>
            <person name="Kolonay J.F."/>
            <person name="Brinkac L.M."/>
            <person name="Beanan M.J."/>
            <person name="Dodson R.J."/>
            <person name="Daugherty S.C."/>
            <person name="Madupu R."/>
            <person name="Angiuoli S.V."/>
            <person name="Durkin A.S."/>
            <person name="Haft D.H."/>
            <person name="Vamathevan J.J."/>
            <person name="Khouri H."/>
            <person name="Utterback T.R."/>
            <person name="Lee C."/>
            <person name="Dimitrov G."/>
            <person name="Jiang L."/>
            <person name="Qin H."/>
            <person name="Weidman J."/>
            <person name="Tran K."/>
            <person name="Kang K.H."/>
            <person name="Hance I.R."/>
            <person name="Nelson K.E."/>
            <person name="Fraser C.M."/>
        </authorList>
    </citation>
    <scope>NUCLEOTIDE SEQUENCE [LARGE SCALE GENOMIC DNA]</scope>
    <source>
        <strain>ATCC 35984 / DSM 28319 / BCRC 17069 / CCUG 31568 / BM 3577 / RP62A</strain>
    </source>
</reference>
<name>ASSY_STAEQ</name>
<dbReference type="EC" id="6.3.4.5" evidence="1"/>
<dbReference type="EMBL" id="CP000029">
    <property type="protein sequence ID" value="AAW53920.1"/>
    <property type="molecule type" value="Genomic_DNA"/>
</dbReference>
<dbReference type="RefSeq" id="WP_001832499.1">
    <property type="nucleotide sequence ID" value="NC_002976.3"/>
</dbReference>
<dbReference type="SMR" id="Q5HQK0"/>
<dbReference type="STRING" id="176279.SERP0549"/>
<dbReference type="KEGG" id="ser:SERP0549"/>
<dbReference type="eggNOG" id="COG0137">
    <property type="taxonomic scope" value="Bacteria"/>
</dbReference>
<dbReference type="HOGENOM" id="CLU_032784_4_2_9"/>
<dbReference type="UniPathway" id="UPA00068">
    <property type="reaction ID" value="UER00113"/>
</dbReference>
<dbReference type="Proteomes" id="UP000000531">
    <property type="component" value="Chromosome"/>
</dbReference>
<dbReference type="GO" id="GO:0005737">
    <property type="term" value="C:cytoplasm"/>
    <property type="evidence" value="ECO:0007669"/>
    <property type="project" value="UniProtKB-SubCell"/>
</dbReference>
<dbReference type="GO" id="GO:0004055">
    <property type="term" value="F:argininosuccinate synthase activity"/>
    <property type="evidence" value="ECO:0007669"/>
    <property type="project" value="UniProtKB-UniRule"/>
</dbReference>
<dbReference type="GO" id="GO:0005524">
    <property type="term" value="F:ATP binding"/>
    <property type="evidence" value="ECO:0007669"/>
    <property type="project" value="UniProtKB-UniRule"/>
</dbReference>
<dbReference type="GO" id="GO:0000053">
    <property type="term" value="P:argininosuccinate metabolic process"/>
    <property type="evidence" value="ECO:0007669"/>
    <property type="project" value="TreeGrafter"/>
</dbReference>
<dbReference type="GO" id="GO:0006526">
    <property type="term" value="P:L-arginine biosynthetic process"/>
    <property type="evidence" value="ECO:0007669"/>
    <property type="project" value="UniProtKB-UniRule"/>
</dbReference>
<dbReference type="GO" id="GO:0000050">
    <property type="term" value="P:urea cycle"/>
    <property type="evidence" value="ECO:0007669"/>
    <property type="project" value="TreeGrafter"/>
</dbReference>
<dbReference type="CDD" id="cd01999">
    <property type="entry name" value="ASS"/>
    <property type="match status" value="1"/>
</dbReference>
<dbReference type="FunFam" id="1.20.5.470:FF:000002">
    <property type="entry name" value="Argininosuccinate synthase"/>
    <property type="match status" value="1"/>
</dbReference>
<dbReference type="FunFam" id="3.40.50.620:FF:000038">
    <property type="entry name" value="Argininosuccinate synthase"/>
    <property type="match status" value="1"/>
</dbReference>
<dbReference type="FunFam" id="3.90.1260.10:FF:000007">
    <property type="entry name" value="Argininosuccinate synthase"/>
    <property type="match status" value="1"/>
</dbReference>
<dbReference type="Gene3D" id="3.90.1260.10">
    <property type="entry name" value="Argininosuccinate synthetase, chain A, domain 2"/>
    <property type="match status" value="1"/>
</dbReference>
<dbReference type="Gene3D" id="3.40.50.620">
    <property type="entry name" value="HUPs"/>
    <property type="match status" value="1"/>
</dbReference>
<dbReference type="Gene3D" id="1.20.5.470">
    <property type="entry name" value="Single helix bin"/>
    <property type="match status" value="1"/>
</dbReference>
<dbReference type="HAMAP" id="MF_00005">
    <property type="entry name" value="Arg_succ_synth_type1"/>
    <property type="match status" value="1"/>
</dbReference>
<dbReference type="InterPro" id="IPR048268">
    <property type="entry name" value="Arginosuc_syn_C"/>
</dbReference>
<dbReference type="InterPro" id="IPR048267">
    <property type="entry name" value="Arginosuc_syn_N"/>
</dbReference>
<dbReference type="InterPro" id="IPR001518">
    <property type="entry name" value="Arginosuc_synth"/>
</dbReference>
<dbReference type="InterPro" id="IPR018223">
    <property type="entry name" value="Arginosuc_synth_CS"/>
</dbReference>
<dbReference type="InterPro" id="IPR023434">
    <property type="entry name" value="Arginosuc_synth_type_1_subfam"/>
</dbReference>
<dbReference type="InterPro" id="IPR024074">
    <property type="entry name" value="AS_cat/multimer_dom_body"/>
</dbReference>
<dbReference type="InterPro" id="IPR014729">
    <property type="entry name" value="Rossmann-like_a/b/a_fold"/>
</dbReference>
<dbReference type="NCBIfam" id="TIGR00032">
    <property type="entry name" value="argG"/>
    <property type="match status" value="1"/>
</dbReference>
<dbReference type="NCBIfam" id="NF001770">
    <property type="entry name" value="PRK00509.1"/>
    <property type="match status" value="1"/>
</dbReference>
<dbReference type="PANTHER" id="PTHR11587">
    <property type="entry name" value="ARGININOSUCCINATE SYNTHASE"/>
    <property type="match status" value="1"/>
</dbReference>
<dbReference type="PANTHER" id="PTHR11587:SF2">
    <property type="entry name" value="ARGININOSUCCINATE SYNTHASE"/>
    <property type="match status" value="1"/>
</dbReference>
<dbReference type="Pfam" id="PF20979">
    <property type="entry name" value="Arginosuc_syn_C"/>
    <property type="match status" value="1"/>
</dbReference>
<dbReference type="Pfam" id="PF00764">
    <property type="entry name" value="Arginosuc_synth"/>
    <property type="match status" value="1"/>
</dbReference>
<dbReference type="SUPFAM" id="SSF52402">
    <property type="entry name" value="Adenine nucleotide alpha hydrolases-like"/>
    <property type="match status" value="1"/>
</dbReference>
<dbReference type="SUPFAM" id="SSF69864">
    <property type="entry name" value="Argininosuccinate synthetase, C-terminal domain"/>
    <property type="match status" value="1"/>
</dbReference>
<dbReference type="PROSITE" id="PS00564">
    <property type="entry name" value="ARGININOSUCCIN_SYN_1"/>
    <property type="match status" value="1"/>
</dbReference>
<dbReference type="PROSITE" id="PS00565">
    <property type="entry name" value="ARGININOSUCCIN_SYN_2"/>
    <property type="match status" value="1"/>
</dbReference>
<comment type="catalytic activity">
    <reaction evidence="1">
        <text>L-citrulline + L-aspartate + ATP = 2-(N(omega)-L-arginino)succinate + AMP + diphosphate + H(+)</text>
        <dbReference type="Rhea" id="RHEA:10932"/>
        <dbReference type="ChEBI" id="CHEBI:15378"/>
        <dbReference type="ChEBI" id="CHEBI:29991"/>
        <dbReference type="ChEBI" id="CHEBI:30616"/>
        <dbReference type="ChEBI" id="CHEBI:33019"/>
        <dbReference type="ChEBI" id="CHEBI:57472"/>
        <dbReference type="ChEBI" id="CHEBI:57743"/>
        <dbReference type="ChEBI" id="CHEBI:456215"/>
        <dbReference type="EC" id="6.3.4.5"/>
    </reaction>
</comment>
<comment type="pathway">
    <text evidence="1">Amino-acid biosynthesis; L-arginine biosynthesis; L-arginine from L-ornithine and carbamoyl phosphate: step 2/3.</text>
</comment>
<comment type="subunit">
    <text evidence="1">Homotetramer.</text>
</comment>
<comment type="subcellular location">
    <subcellularLocation>
        <location evidence="1">Cytoplasm</location>
    </subcellularLocation>
</comment>
<comment type="similarity">
    <text evidence="1">Belongs to the argininosuccinate synthase family. Type 1 subfamily.</text>
</comment>
<keyword id="KW-0028">Amino-acid biosynthesis</keyword>
<keyword id="KW-0055">Arginine biosynthesis</keyword>
<keyword id="KW-0067">ATP-binding</keyword>
<keyword id="KW-0963">Cytoplasm</keyword>
<keyword id="KW-0436">Ligase</keyword>
<keyword id="KW-0547">Nucleotide-binding</keyword>
<keyword id="KW-1185">Reference proteome</keyword>
<feature type="chain" id="PRO_0000148642" description="Argininosuccinate synthase">
    <location>
        <begin position="1"/>
        <end position="401"/>
    </location>
</feature>
<feature type="binding site" evidence="1">
    <location>
        <begin position="8"/>
        <end position="16"/>
    </location>
    <ligand>
        <name>ATP</name>
        <dbReference type="ChEBI" id="CHEBI:30616"/>
    </ligand>
</feature>
<feature type="binding site" evidence="1">
    <location>
        <position position="85"/>
    </location>
    <ligand>
        <name>L-citrulline</name>
        <dbReference type="ChEBI" id="CHEBI:57743"/>
    </ligand>
</feature>
<feature type="binding site" evidence="1">
    <location>
        <position position="115"/>
    </location>
    <ligand>
        <name>ATP</name>
        <dbReference type="ChEBI" id="CHEBI:30616"/>
    </ligand>
</feature>
<feature type="binding site" evidence="1">
    <location>
        <position position="117"/>
    </location>
    <ligand>
        <name>L-aspartate</name>
        <dbReference type="ChEBI" id="CHEBI:29991"/>
    </ligand>
</feature>
<feature type="binding site" evidence="1">
    <location>
        <position position="121"/>
    </location>
    <ligand>
        <name>L-aspartate</name>
        <dbReference type="ChEBI" id="CHEBI:29991"/>
    </ligand>
</feature>
<feature type="binding site" evidence="1">
    <location>
        <position position="121"/>
    </location>
    <ligand>
        <name>L-citrulline</name>
        <dbReference type="ChEBI" id="CHEBI:57743"/>
    </ligand>
</feature>
<feature type="binding site" evidence="1">
    <location>
        <position position="122"/>
    </location>
    <ligand>
        <name>L-aspartate</name>
        <dbReference type="ChEBI" id="CHEBI:29991"/>
    </ligand>
</feature>
<feature type="binding site" evidence="1">
    <location>
        <position position="125"/>
    </location>
    <ligand>
        <name>L-citrulline</name>
        <dbReference type="ChEBI" id="CHEBI:57743"/>
    </ligand>
</feature>
<feature type="binding site" evidence="1">
    <location>
        <position position="173"/>
    </location>
    <ligand>
        <name>L-citrulline</name>
        <dbReference type="ChEBI" id="CHEBI:57743"/>
    </ligand>
</feature>
<feature type="binding site" evidence="1">
    <location>
        <position position="258"/>
    </location>
    <ligand>
        <name>L-citrulline</name>
        <dbReference type="ChEBI" id="CHEBI:57743"/>
    </ligand>
</feature>
<feature type="binding site" evidence="1">
    <location>
        <position position="270"/>
    </location>
    <ligand>
        <name>L-citrulline</name>
        <dbReference type="ChEBI" id="CHEBI:57743"/>
    </ligand>
</feature>
<sequence length="401" mass="44742">MKDKIVLAYSGGLDTSVAVQWLIDKGYDVVACCLDVGEGKDLDVVYQKALDMGAVECHIIDATKEFSDDYVSYAIKGNLMYENAYPLVSALSRPLIAKKLVEIAEKTNSIGIAHGCTGKGNDQVRFEVAIKALNPKLKAFAPVREWAWSREEEIDYAIKHNIPVSINYDSPYSIDQNLWGRANECGILEDPYAAPPEDAFDLTTPLEETPDNADEIILTFKQGIPVQVDGKDYQLDDLILYLNQLAGKHGIGRIDHVENRMVGIKSREIYETPGAEVILKAHKALETITLTKDVAHFKPVIEKQFSEQIYNGLWFSPLTDSLKLFIDSTQQYVEGDVRIKLFKGNAIVNGRQSPYTLYDEKLATYTKEDAFNQESAVGFIDIYGLPTQVNALLHGGYSNEQ</sequence>